<comment type="function">
    <text evidence="1 3">Mediates binding to human platelets, possibly through a receptor-ligand interaction.</text>
</comment>
<comment type="subcellular location">
    <subcellularLocation>
        <location evidence="4">Secreted</location>
        <location evidence="4">Cell wall</location>
        <topology evidence="4">Peptidoglycan-anchor</topology>
    </subcellularLocation>
    <text evidence="3">Exported by the accessory SecA2/SecY2 system. Anchored to the cell wall by sortase A (By similarity).</text>
</comment>
<comment type="PTM">
    <text evidence="1 3">Proteolytically cleaved by a metalloprotease.</text>
</comment>
<comment type="PTM">
    <text evidence="2 3">Glycosylated (By similarity). It is probable that most of the Ser residues in SSR1 and SSR2 are O-GlcNAcylated. Sequential glycosylation by sugar transferases are able to generate complex sugar polymorphisms (By similarity).</text>
</comment>
<comment type="similarity">
    <text evidence="6">Belongs to the serine-rich repeat protein (SRRP) family.</text>
</comment>
<feature type="signal peptide" evidence="3">
    <location>
        <begin position="1"/>
        <end position="91"/>
    </location>
</feature>
<feature type="chain" id="PRO_0000273936" description="Serine-rich adhesin for platelets">
    <location>
        <begin position="92"/>
        <end position="3567"/>
    </location>
</feature>
<feature type="propeptide" id="PRO_0000273937" description="Removed by sortase" evidence="4">
    <location>
        <begin position="3568"/>
        <end position="3608"/>
    </location>
</feature>
<feature type="region of interest" description="Serine-rich repeat region 1, SRR1" evidence="3">
    <location>
        <begin position="92"/>
        <end position="302"/>
    </location>
</feature>
<feature type="region of interest" description="Disordered" evidence="5">
    <location>
        <begin position="105"/>
        <end position="280"/>
    </location>
</feature>
<feature type="region of interest" description="Non-repeat region (NRR)" evidence="3">
    <location>
        <begin position="303"/>
        <end position="755"/>
    </location>
</feature>
<feature type="region of interest" description="Disordered" evidence="5">
    <location>
        <begin position="495"/>
        <end position="3575"/>
    </location>
</feature>
<feature type="region of interest" description="Serine-rich repeat region 2, SRR2" evidence="3 6">
    <location>
        <begin position="756"/>
        <end position="3567"/>
    </location>
</feature>
<feature type="region of interest" description="Disordered" evidence="5">
    <location>
        <begin position="3588"/>
        <end position="3608"/>
    </location>
</feature>
<feature type="short sequence motif" description="LPXTG sorting signal" evidence="4">
    <location>
        <begin position="3564"/>
        <end position="3568"/>
    </location>
</feature>
<feature type="compositionally biased region" description="Low complexity" evidence="5">
    <location>
        <begin position="114"/>
        <end position="201"/>
    </location>
</feature>
<feature type="compositionally biased region" description="Polar residues" evidence="5">
    <location>
        <begin position="209"/>
        <end position="220"/>
    </location>
</feature>
<feature type="compositionally biased region" description="Low complexity" evidence="5">
    <location>
        <begin position="221"/>
        <end position="234"/>
    </location>
</feature>
<feature type="compositionally biased region" description="Low complexity" evidence="5">
    <location>
        <begin position="244"/>
        <end position="280"/>
    </location>
</feature>
<feature type="compositionally biased region" description="Low complexity" evidence="5">
    <location>
        <begin position="497"/>
        <end position="3545"/>
    </location>
</feature>
<feature type="compositionally biased region" description="Basic residues" evidence="5">
    <location>
        <begin position="3593"/>
        <end position="3602"/>
    </location>
</feature>
<feature type="modified residue" description="Pentaglycyl murein peptidoglycan amidated threonine" evidence="4">
    <location>
        <position position="3567"/>
    </location>
</feature>
<keyword id="KW-0130">Cell adhesion</keyword>
<keyword id="KW-0134">Cell wall</keyword>
<keyword id="KW-0325">Glycoprotein</keyword>
<keyword id="KW-0572">Peptidoglycan-anchor</keyword>
<keyword id="KW-0964">Secreted</keyword>
<keyword id="KW-0732">Signal</keyword>
<keyword id="KW-0843">Virulence</keyword>
<proteinExistence type="inferred from homology"/>
<sequence length="3608" mass="344174">MSRKERNFKRFFGQEKARVKLYKSGKQWVKAGIREVQLLKVLGLPFLNKDVEQINNLDTNKDKNFKNQAMKATGLAGGAFTFAMLNDHHAYAASETPMTSEIASNSETVANQNSTTVTKSETSTTEYISSQTSTSQDATSSTNSTEKSTSSSTTDSQTSTDSTSDKSTSNSEKQDSSMSNSDTKASSSSTTDNSTSNNSTTSEKDTNSQANTTSTDSQKGSTSTNDNSITSTSTKDNQIRKNSTESNSITASNSTSDSNSGSTVSTNSTTSQLTSTSESQINTDLGSTLLVSDSTSTSTSTAPLKLRTFSRLATTTFAAAAATSTTNTYTGAGTDTNYNIPIYYKLTTVNNGTSMTFTYTVTYDNPATTTVERPTALSNSYAIYNTGTTNQTMFTLGSAYGTPSTATSYITDSTGAQVSNPRANTTNINKQGSGYTWANGYQMNGAQAKQGYGLTTTWTVPINSSGDTSFTFNPYSTSVTGGTNFFNGKKVTVTDPTSTANSQSASTSTANSQSASTSKSTSTANSQSASTSTSTSTANSQSASTSTSTSTANSQSASTSTSTSTANSQSASTSTSTSTANSQSTSTSTSTSTANSQSTSTSTSTSVSDSTSASTSLSGSTSTSVSDSTSASTSLSDSASTSVSDSTSASTSLSASTSTSESDSTSASTSLSESTSTSLSDSLSASTSLSDSASTSVSDSTSASTSLSGSESASLSDSASASTSLSESTSTSESTSTSESDSTSASTSLSGSESASLSDSASASTSLSGSESASLSDSASASTSLSGSESASLSDSASASTSLSGSESASLSDSASASTSLSGSESASLSDSASASTSLSESTSTSLSDSASASTSLSESTSTSVSDSTSASTSLSASTSTSVSDSTSTSTSDSASTSTSVSDSTSTSTSLSGSTSTSVSDSTSASTSLSASTSTSVSDSTSTSTSDSASTSTSVSDSTSTSTSLSGSTSTSVSDSTSASTSLSESTSTSLSDSASASTSLSESTSTSVSDSTSTSTSDSASTSTSVSDSTSTSTSLSGSTSTSVSDSTSASTSDSASTSTSVSDSTSASTSDSASTSTSVSDSTSTSTSLSGSTSTSVSDSTSASTSLSESTSTSVSDSTSASTSLSDSASTSVSDSTSASTSLSESTSTSVSDSTSTSTSLSESTSTSVSDSASASTSLSDSASTSVSDSTSASTSLSGSTSTSVSDSTSTSTSLSESTSTSLSDSASASTSLSDSASTSVSDSTSASTSLSGSTSTSVSDSTSTSTSLSESTSTSLSDSASASTSLSASTSTSVSDSTSASTSLSGSTSTSESDSTSMSTSLSGSESTSLSDSLSASTSLSGSTSTSVSDSTSASTSLSGSTSTSVSDSTSVSTSLSASTSTSESDSTSTSTSDSASTSTSVSDSTSASTSLSASTSTSVSDSTSASTSLSASTSTSVSDSTSASTSLSASTSTSVSDSTSASTSLSASTSTSVSDSTSMSTSLSGSESTSLSDSLSASTSVSASTSTSVSDSTSASTSLSGSTSTSVSDSTSTSTSLSESTSTSVSDSASASTSLSASTSTSVSDSTSASTSLSASTSTSVSDSTSASTSLSASTSTSVSDSTSASTSLSASTSTSVSDSTSTSTSLSASTSTSVSDSTSASTSLSGSASASLSDSLSASTSVSASTSTSVSDSTSMSTSLSGSESTSLSDSLSASTSVSASTSTSVSDSTSASTSLSGSTSTSVSDSTSTSTSLSESTSTSVSDSASASTSLSDSASTSVSDSTSASTSLSGSTSTSVSDSTSTSTSLSESTSTSLSDSASASTSLSDSASTSVSDSTSASTSLSGSTSTSVSDSTSTSTSLSESTSTSLSDSTSISTSLSASTSTSESDSTSTSTSLSGSTSTSVSDSISRSTSLSGSTSTSVSDSTSTSTSDSASTSTSVSDSTSASTSLSASTSTSVSDSTSASTSLSASTSTSVSDSTSASTSLSASTSTSVSDSTSASTSLSASTSTSVSDSTSASTSLSASTSTSVSDSTSASTSLSASTSTSVSDSTSTSTSLSASTSTSVSDSTSASTSLSGSASASLSDSLSASTSVSASTSTSVSDSTSTSTSLSESTSTSLSNSASASTSLSGSTSTSVSDSTSASTSLSASTSTSVSDSTSMSTSLSGSESTSLSDSLSASTSVSASTSTSVSDSTSASTSLSGSTSTSVSDSTSTSTSLSESTSTSVSDSASASTSLSDSASTSVSDSTSASTSLSGSTSTSVSDSTSTSTSLSESTSTSLSDSASASTSLSDSASTSVSDSTSASTSLSGSTSTSVSDSTSASTSLSGSTSTSVSDSTSTSTSLSASTSTSESDSTSTSTSLSGSTSTSVSDSISGSTSLSGSTSTSVSDSTSTSTSDSASTSTSVSDSTSASTSLSASTSTSVSDSTSASTSLSASTSTSVSDSTSASTSLSGSASASLSDSLSASTSVSASTSTSVSDSTSTSTSLSESTSTSLSNSASASTSLSGSTSTSVSDSTSASTSLSASTSTSVSDSTSTSTSLSESTSTSLSDSASASTSLSDSASTSVSDSTSASTSLSGSESTSLSDSASASTSLSASTSTSVSDSTSTSTSDSVSTSTSMSDSTSMSTSLSGSTSTSVSDSTSASTSLSGSTSTSVSDSTSVSTSLSASTSTSESDSTSTSTSLSGSTSTSVSDSTSASTSLSGSTSTSVSDSTSTSTSDSASTSTSVSDSTSASTSLSASTSTSVSDSTSASTSLSASTSTSVSDSTSASTSLSASTSTSVSDSTSASTSLSASTSTSVSDSTSTNTSLSASTSTSVSDSTSASTSLSASTSTSVSDSTSASTSLSASTSTSVSDSTSTSTSLSASTSTSVSDSTSASTSLSGSASASLSDSLSASTSVSASTSTSVSDSTSTSTSLSESTSTSLSNSASASTSLSGSASASLSDSLSASTSVSASTSTSVSDSTSTSTSLSESTSTSLSDSASASTSLSDSASTSVSDSTSASTSLSESTSTSVSDSTSTSTSLSGSESTSLSDSASASTSLSASTSTSVSDSTSTSTSDSVSTSTSMSDSTSMSTSLSGSTSTSVSDSTSASTSLSGSTSTSVSDSTSVSTSLSASTSTSESDSTSTSTSLSGSTSTSVSDSISGSTSLSGSTSTSVSDSTSTSTSDSASTSTSVSDSTSASTSLSASTSTSVSDSTSASTSLSASTSTSVSDSTSASTSLSASTSTSVSDSTSASTSLSASTSTSVSDSTSTSTSLSASTSTSVSDSTSGSTSLSASTSTSVSDSTSTSTSLSASTSTSVSDSTSMSTSLSGSTSTSVSDSTSASTSLSGSTSTSVSDSTSTSTSLSASTSTSVSDSTSTSTSLSGSTSTSVSDSTSASTSSSESTSTSVSDSTSASVSTSISTSISMSESSSTSASTSDSTSTSASTSESRSASHSMSGTDSNNTSSSDSKSHSISNSDSNTTSDSASASTSISDSSSTSTSDSNASHSFSTSHSVSESNSMSTSHSQFDSISTSESMSGTDSTSLSTSLSHSASTSNSTSMTTSESQSNNDSQMHSNSLHHDAKDELPDTGDSDSNSTGLVSAVAAMLAGLGLFGKSRKNKKDKKNKGSEQ</sequence>
<evidence type="ECO:0000250" key="1"/>
<evidence type="ECO:0000250" key="2">
    <source>
        <dbReference type="UniProtKB" id="A0A0H2URK1"/>
    </source>
</evidence>
<evidence type="ECO:0000250" key="3">
    <source>
        <dbReference type="UniProtKB" id="Q2FUW1"/>
    </source>
</evidence>
<evidence type="ECO:0000255" key="4">
    <source>
        <dbReference type="PROSITE-ProRule" id="PRU00477"/>
    </source>
</evidence>
<evidence type="ECO:0000256" key="5">
    <source>
        <dbReference type="SAM" id="MobiDB-lite"/>
    </source>
</evidence>
<evidence type="ECO:0000305" key="6"/>
<protein>
    <recommendedName>
        <fullName>Serine-rich adhesin for platelets</fullName>
    </recommendedName>
    <alternativeName>
        <fullName evidence="6">Adhesin SraP</fullName>
    </alternativeName>
</protein>
<accession>Q4L9P0</accession>
<organism>
    <name type="scientific">Staphylococcus haemolyticus (strain JCSC1435)</name>
    <dbReference type="NCBI Taxonomy" id="279808"/>
    <lineage>
        <taxon>Bacteria</taxon>
        <taxon>Bacillati</taxon>
        <taxon>Bacillota</taxon>
        <taxon>Bacilli</taxon>
        <taxon>Bacillales</taxon>
        <taxon>Staphylococcaceae</taxon>
        <taxon>Staphylococcus</taxon>
    </lineage>
</organism>
<name>SRAP_STAHJ</name>
<gene>
    <name type="primary">sraP</name>
    <name type="ordered locus">SH0326</name>
</gene>
<dbReference type="EMBL" id="AP006716">
    <property type="protein sequence ID" value="BAE03635.1"/>
    <property type="molecule type" value="Genomic_DNA"/>
</dbReference>
<dbReference type="SMR" id="Q4L9P0"/>
<dbReference type="KEGG" id="sha:SH0326"/>
<dbReference type="eggNOG" id="COG3391">
    <property type="taxonomic scope" value="Bacteria"/>
</dbReference>
<dbReference type="HOGENOM" id="CLU_224803_0_0_9"/>
<dbReference type="OrthoDB" id="2414608at2"/>
<dbReference type="Proteomes" id="UP000000543">
    <property type="component" value="Chromosome"/>
</dbReference>
<dbReference type="GO" id="GO:0005576">
    <property type="term" value="C:extracellular region"/>
    <property type="evidence" value="ECO:0007669"/>
    <property type="project" value="UniProtKB-KW"/>
</dbReference>
<dbReference type="GO" id="GO:0007155">
    <property type="term" value="P:cell adhesion"/>
    <property type="evidence" value="ECO:0007669"/>
    <property type="project" value="UniProtKB-KW"/>
</dbReference>
<dbReference type="InterPro" id="IPR022263">
    <property type="entry name" value="KxYKxGKxW"/>
</dbReference>
<dbReference type="InterPro" id="IPR019931">
    <property type="entry name" value="LPXTG_anchor"/>
</dbReference>
<dbReference type="NCBIfam" id="TIGR03715">
    <property type="entry name" value="KxYKxGKxW"/>
    <property type="match status" value="1"/>
</dbReference>
<dbReference type="NCBIfam" id="TIGR01167">
    <property type="entry name" value="LPXTG_anchor"/>
    <property type="match status" value="1"/>
</dbReference>
<dbReference type="Pfam" id="PF00746">
    <property type="entry name" value="Gram_pos_anchor"/>
    <property type="match status" value="1"/>
</dbReference>
<dbReference type="Pfam" id="PF19258">
    <property type="entry name" value="KxYKxGKxW_sig"/>
    <property type="match status" value="1"/>
</dbReference>
<dbReference type="PROSITE" id="PS50847">
    <property type="entry name" value="GRAM_POS_ANCHORING"/>
    <property type="match status" value="1"/>
</dbReference>
<reference key="1">
    <citation type="journal article" date="2005" name="J. Bacteriol.">
        <title>Whole-genome sequencing of Staphylococcus haemolyticus uncovers the extreme plasticity of its genome and the evolution of human-colonizing staphylococcal species.</title>
        <authorList>
            <person name="Takeuchi F."/>
            <person name="Watanabe S."/>
            <person name="Baba T."/>
            <person name="Yuzawa H."/>
            <person name="Ito T."/>
            <person name="Morimoto Y."/>
            <person name="Kuroda M."/>
            <person name="Cui L."/>
            <person name="Takahashi M."/>
            <person name="Ankai A."/>
            <person name="Baba S."/>
            <person name="Fukui S."/>
            <person name="Lee J.C."/>
            <person name="Hiramatsu K."/>
        </authorList>
    </citation>
    <scope>NUCLEOTIDE SEQUENCE [LARGE SCALE GENOMIC DNA]</scope>
    <source>
        <strain>JCSC1435</strain>
    </source>
</reference>